<sequence>MIFSRIMRGLLCLCLVLTVFELINGSDEFEHQDSLHLVKRLWRNWEEDQQKDREKRLWRNWEEEEQKDREKRLWRNWEEEEQKEKRNLPELKYEMEKNQEVPQLKRKRGILEKIWIPNEIGR</sequence>
<proteinExistence type="evidence at transcript level"/>
<comment type="subcellular location">
    <subcellularLocation>
        <location evidence="3">Secreted</location>
    </subcellularLocation>
</comment>
<comment type="tissue specificity">
    <text evidence="3">Expressed by the venom gland.</text>
</comment>
<comment type="similarity">
    <text evidence="2">Belongs to the scoloptoxin-08 family.</text>
</comment>
<reference key="1">
    <citation type="journal article" date="2014" name="J. Proteomics">
        <title>Multifunctional warheads: diversification of the toxin arsenal of centipedes via novel multidomain transcripts.</title>
        <authorList>
            <person name="Undheim E.A."/>
            <person name="Sunagar K."/>
            <person name="Hamilton B.R."/>
            <person name="Jones A."/>
            <person name="Venter D.J."/>
            <person name="Fry B.G."/>
            <person name="King G.F."/>
        </authorList>
    </citation>
    <scope>NUCLEOTIDE SEQUENCE [MRNA]</scope>
    <source>
        <tissue>Venom gland</tissue>
    </source>
</reference>
<accession>A0A023W168</accession>
<evidence type="ECO:0000255" key="1"/>
<evidence type="ECO:0000305" key="2"/>
<evidence type="ECO:0000305" key="3">
    <source>
    </source>
</evidence>
<evidence type="ECO:0000312" key="4">
    <source>
        <dbReference type="EMBL" id="AHY22615.1"/>
    </source>
</evidence>
<protein>
    <recommendedName>
        <fullName evidence="2">U-scoloptoxin-Sa5a</fullName>
        <shortName evidence="2">U-SLPTX-Sa5a</shortName>
    </recommendedName>
    <alternativeName>
        <fullName evidence="4">U-scoloptoxin-Er5-like</fullName>
        <shortName evidence="4">U-SLPTX-Er5-like</shortName>
    </alternativeName>
</protein>
<keyword id="KW-0165">Cleavage on pair of basic residues</keyword>
<keyword id="KW-0677">Repeat</keyword>
<keyword id="KW-0964">Secreted</keyword>
<keyword id="KW-0732">Signal</keyword>
<keyword id="KW-0800">Toxin</keyword>
<feature type="signal peptide" evidence="1">
    <location>
        <begin position="1"/>
        <end position="25"/>
    </location>
</feature>
<feature type="propeptide" id="PRO_0000446732" evidence="2">
    <location>
        <begin position="26"/>
        <end position="86"/>
    </location>
</feature>
<feature type="peptide" id="PRO_5001524653" description="U-scoloptoxin-Sa5a" evidence="2">
    <location>
        <begin position="87"/>
        <end position="104"/>
    </location>
</feature>
<feature type="propeptide" id="PRO_0000446733" evidence="2">
    <location>
        <begin position="105"/>
        <end position="122"/>
    </location>
</feature>
<feature type="repeat" description="RLWRNWE 1" evidence="3">
    <location>
        <begin position="40"/>
        <end position="46"/>
    </location>
</feature>
<feature type="repeat" description="RLWRNWE 2" evidence="3">
    <location>
        <begin position="56"/>
        <end position="62"/>
    </location>
</feature>
<feature type="repeat" description="RLWRNWE 3" evidence="3">
    <location>
        <begin position="72"/>
        <end position="78"/>
    </location>
</feature>
<name>TX85A_SCOAL</name>
<organism>
    <name type="scientific">Scolopendra alternans</name>
    <name type="common">Florida Keys giant centipede</name>
    <dbReference type="NCBI Taxonomy" id="1329349"/>
    <lineage>
        <taxon>Eukaryota</taxon>
        <taxon>Metazoa</taxon>
        <taxon>Ecdysozoa</taxon>
        <taxon>Arthropoda</taxon>
        <taxon>Myriapoda</taxon>
        <taxon>Chilopoda</taxon>
        <taxon>Pleurostigmophora</taxon>
        <taxon>Scolopendromorpha</taxon>
        <taxon>Scolopendridae</taxon>
        <taxon>Scolopendra</taxon>
    </lineage>
</organism>
<dbReference type="EMBL" id="KF130764">
    <property type="protein sequence ID" value="AHY22615.1"/>
    <property type="molecule type" value="mRNA"/>
</dbReference>
<dbReference type="SMR" id="A0A023W168"/>
<dbReference type="GO" id="GO:0005576">
    <property type="term" value="C:extracellular region"/>
    <property type="evidence" value="ECO:0007669"/>
    <property type="project" value="UniProtKB-SubCell"/>
</dbReference>
<dbReference type="GO" id="GO:0090729">
    <property type="term" value="F:toxin activity"/>
    <property type="evidence" value="ECO:0007669"/>
    <property type="project" value="UniProtKB-KW"/>
</dbReference>